<evidence type="ECO:0000255" key="1">
    <source>
        <dbReference type="HAMAP-Rule" id="MF_01026"/>
    </source>
</evidence>
<geneLocation type="plasmid">
    <name>pRPE</name>
</geneLocation>
<organism>
    <name type="scientific">Buchnera aphidicola subsp. Rhopalosiphum padi</name>
    <dbReference type="NCBI Taxonomy" id="98793"/>
    <lineage>
        <taxon>Bacteria</taxon>
        <taxon>Pseudomonadati</taxon>
        <taxon>Pseudomonadota</taxon>
        <taxon>Gammaproteobacteria</taxon>
        <taxon>Enterobacterales</taxon>
        <taxon>Erwiniaceae</taxon>
        <taxon>Buchnera</taxon>
    </lineage>
</organism>
<accession>P48573</accession>
<feature type="chain" id="PRO_0000076720" description="3-isopropylmalate dehydratase large subunit">
    <location>
        <begin position="1"/>
        <end position="471"/>
    </location>
</feature>
<feature type="binding site" evidence="1">
    <location>
        <position position="347"/>
    </location>
    <ligand>
        <name>[4Fe-4S] cluster</name>
        <dbReference type="ChEBI" id="CHEBI:49883"/>
    </ligand>
</feature>
<feature type="binding site" evidence="1">
    <location>
        <position position="409"/>
    </location>
    <ligand>
        <name>[4Fe-4S] cluster</name>
        <dbReference type="ChEBI" id="CHEBI:49883"/>
    </ligand>
</feature>
<feature type="binding site" evidence="1">
    <location>
        <position position="412"/>
    </location>
    <ligand>
        <name>[4Fe-4S] cluster</name>
        <dbReference type="ChEBI" id="CHEBI:49883"/>
    </ligand>
</feature>
<gene>
    <name evidence="1" type="primary">leuC</name>
</gene>
<proteinExistence type="inferred from homology"/>
<keyword id="KW-0004">4Fe-4S</keyword>
<keyword id="KW-0028">Amino-acid biosynthesis</keyword>
<keyword id="KW-0100">Branched-chain amino acid biosynthesis</keyword>
<keyword id="KW-0408">Iron</keyword>
<keyword id="KW-0411">Iron-sulfur</keyword>
<keyword id="KW-0432">Leucine biosynthesis</keyword>
<keyword id="KW-0456">Lyase</keyword>
<keyword id="KW-0479">Metal-binding</keyword>
<keyword id="KW-0614">Plasmid</keyword>
<dbReference type="EC" id="4.2.1.33" evidence="1"/>
<dbReference type="EMBL" id="X71612">
    <property type="protein sequence ID" value="CAA50617.1"/>
    <property type="molecule type" value="Genomic_DNA"/>
</dbReference>
<dbReference type="SMR" id="P48573"/>
<dbReference type="UniPathway" id="UPA00048">
    <property type="reaction ID" value="UER00071"/>
</dbReference>
<dbReference type="GO" id="GO:0003861">
    <property type="term" value="F:3-isopropylmalate dehydratase activity"/>
    <property type="evidence" value="ECO:0007669"/>
    <property type="project" value="UniProtKB-UniRule"/>
</dbReference>
<dbReference type="GO" id="GO:0051539">
    <property type="term" value="F:4 iron, 4 sulfur cluster binding"/>
    <property type="evidence" value="ECO:0007669"/>
    <property type="project" value="UniProtKB-KW"/>
</dbReference>
<dbReference type="GO" id="GO:0046872">
    <property type="term" value="F:metal ion binding"/>
    <property type="evidence" value="ECO:0007669"/>
    <property type="project" value="UniProtKB-KW"/>
</dbReference>
<dbReference type="GO" id="GO:0009098">
    <property type="term" value="P:L-leucine biosynthetic process"/>
    <property type="evidence" value="ECO:0007669"/>
    <property type="project" value="UniProtKB-UniRule"/>
</dbReference>
<dbReference type="CDD" id="cd01583">
    <property type="entry name" value="IPMI"/>
    <property type="match status" value="1"/>
</dbReference>
<dbReference type="FunFam" id="3.30.499.10:FF:000007">
    <property type="entry name" value="3-isopropylmalate dehydratase large subunit"/>
    <property type="match status" value="1"/>
</dbReference>
<dbReference type="Gene3D" id="3.30.499.10">
    <property type="entry name" value="Aconitase, domain 3"/>
    <property type="match status" value="2"/>
</dbReference>
<dbReference type="HAMAP" id="MF_01026">
    <property type="entry name" value="LeuC_type1"/>
    <property type="match status" value="1"/>
</dbReference>
<dbReference type="InterPro" id="IPR004430">
    <property type="entry name" value="3-IsopropMal_deHydase_lsu"/>
</dbReference>
<dbReference type="InterPro" id="IPR015931">
    <property type="entry name" value="Acnase/IPM_dHydase_lsu_aba_1/3"/>
</dbReference>
<dbReference type="InterPro" id="IPR001030">
    <property type="entry name" value="Acoase/IPM_deHydtase_lsu_aba"/>
</dbReference>
<dbReference type="InterPro" id="IPR018136">
    <property type="entry name" value="Aconitase_4Fe-4S_BS"/>
</dbReference>
<dbReference type="InterPro" id="IPR036008">
    <property type="entry name" value="Aconitase_4Fe-4S_dom"/>
</dbReference>
<dbReference type="InterPro" id="IPR050067">
    <property type="entry name" value="IPM_dehydratase_rel_enz"/>
</dbReference>
<dbReference type="InterPro" id="IPR033941">
    <property type="entry name" value="IPMI_cat"/>
</dbReference>
<dbReference type="NCBIfam" id="TIGR00170">
    <property type="entry name" value="leuC"/>
    <property type="match status" value="1"/>
</dbReference>
<dbReference type="NCBIfam" id="NF004016">
    <property type="entry name" value="PRK05478.1"/>
    <property type="match status" value="1"/>
</dbReference>
<dbReference type="NCBIfam" id="NF009116">
    <property type="entry name" value="PRK12466.1"/>
    <property type="match status" value="1"/>
</dbReference>
<dbReference type="PANTHER" id="PTHR43822:SF9">
    <property type="entry name" value="3-ISOPROPYLMALATE DEHYDRATASE"/>
    <property type="match status" value="1"/>
</dbReference>
<dbReference type="PANTHER" id="PTHR43822">
    <property type="entry name" value="HOMOACONITASE, MITOCHONDRIAL-RELATED"/>
    <property type="match status" value="1"/>
</dbReference>
<dbReference type="Pfam" id="PF00330">
    <property type="entry name" value="Aconitase"/>
    <property type="match status" value="1"/>
</dbReference>
<dbReference type="PRINTS" id="PR00415">
    <property type="entry name" value="ACONITASE"/>
</dbReference>
<dbReference type="SUPFAM" id="SSF53732">
    <property type="entry name" value="Aconitase iron-sulfur domain"/>
    <property type="match status" value="1"/>
</dbReference>
<dbReference type="PROSITE" id="PS00450">
    <property type="entry name" value="ACONITASE_1"/>
    <property type="match status" value="1"/>
</dbReference>
<dbReference type="PROSITE" id="PS01244">
    <property type="entry name" value="ACONITASE_2"/>
    <property type="match status" value="1"/>
</dbReference>
<sequence>MKKTLYEKIYDAHIVHEEKNNASILYIDLHLLHEVTSPQAFDSLRIKNRVVRQPKKTFATMDHNVSTESKDINASGSMAKIQMQQLIRNCNQFNISLYDLNNPKQGIVHVIGPEQGMTLPGMTIVCGDSHTSTHGAFGALSFGIGTSEVEHVLVTQTLKQQRLKNMKIQIKGKIKNFVTAKDIILFIIGKLGTSGGSGYVIEFCGDVIKKMNMEERMTVCNMAIEMGAKSALIAPDETTFLYLKGRRYSPQGKFWEEAVKYWKTLITRSKAFFDKEFTFDVSNLSPQITWGTSPDQVLSINEKIPDFNFFKDSVKKNLARSACDYMNLKPGSYLTDIKIDKVFIGSCTNSRIEDLRSAAKILKNKKISKNIKAILLPGSGTGTVKKPAEKEGLDKIFIDAGFEWRLPGCSMCLGMNNDKLSDGERCASTSNRNFEGRQGRGGRTHLVSPIMAAAAIYGRFIDVRNLDSETN</sequence>
<name>LEUC_BUCRP</name>
<protein>
    <recommendedName>
        <fullName evidence="1">3-isopropylmalate dehydratase large subunit</fullName>
        <ecNumber evidence="1">4.2.1.33</ecNumber>
    </recommendedName>
    <alternativeName>
        <fullName evidence="1">Alpha-IPM isomerase</fullName>
        <shortName evidence="1">IPMI</shortName>
    </alternativeName>
    <alternativeName>
        <fullName evidence="1">Isopropylmalate isomerase</fullName>
    </alternativeName>
</protein>
<comment type="function">
    <text evidence="1">Catalyzes the isomerization between 2-isopropylmalate and 3-isopropylmalate, via the formation of 2-isopropylmaleate.</text>
</comment>
<comment type="catalytic activity">
    <reaction evidence="1">
        <text>(2R,3S)-3-isopropylmalate = (2S)-2-isopropylmalate</text>
        <dbReference type="Rhea" id="RHEA:32287"/>
        <dbReference type="ChEBI" id="CHEBI:1178"/>
        <dbReference type="ChEBI" id="CHEBI:35121"/>
        <dbReference type="EC" id="4.2.1.33"/>
    </reaction>
</comment>
<comment type="cofactor">
    <cofactor evidence="1">
        <name>[4Fe-4S] cluster</name>
        <dbReference type="ChEBI" id="CHEBI:49883"/>
    </cofactor>
    <text evidence="1">Binds 1 [4Fe-4S] cluster per subunit.</text>
</comment>
<comment type="pathway">
    <text evidence="1">Amino-acid biosynthesis; L-leucine biosynthesis; L-leucine from 3-methyl-2-oxobutanoate: step 2/4.</text>
</comment>
<comment type="subunit">
    <text>Heterodimer of LeuC and LeuD.</text>
</comment>
<comment type="similarity">
    <text evidence="1">Belongs to the aconitase/IPM isomerase family. LeuC type 1 subfamily.</text>
</comment>
<reference key="1">
    <citation type="journal article" date="1995" name="J. Mol. Evol.">
        <title>Discovery and molecular characterization of a plasmid localized in Buchnera sp. bacterial endosymbiont of the aphid Rhopalosiphum padi.</title>
        <authorList>
            <person name="Bracho A.M."/>
            <person name="Martinez-Torres D."/>
            <person name="Moya A."/>
            <person name="Latorre A."/>
        </authorList>
    </citation>
    <scope>NUCLEOTIDE SEQUENCE [GENOMIC DNA]</scope>
</reference>